<comment type="catalytic activity">
    <reaction evidence="1">
        <text>tRNA(Asn) + L-asparagine + ATP = L-asparaginyl-tRNA(Asn) + AMP + diphosphate + H(+)</text>
        <dbReference type="Rhea" id="RHEA:11180"/>
        <dbReference type="Rhea" id="RHEA-COMP:9659"/>
        <dbReference type="Rhea" id="RHEA-COMP:9674"/>
        <dbReference type="ChEBI" id="CHEBI:15378"/>
        <dbReference type="ChEBI" id="CHEBI:30616"/>
        <dbReference type="ChEBI" id="CHEBI:33019"/>
        <dbReference type="ChEBI" id="CHEBI:58048"/>
        <dbReference type="ChEBI" id="CHEBI:78442"/>
        <dbReference type="ChEBI" id="CHEBI:78515"/>
        <dbReference type="ChEBI" id="CHEBI:456215"/>
        <dbReference type="EC" id="6.1.1.22"/>
    </reaction>
</comment>
<comment type="subunit">
    <text evidence="1">Homodimer.</text>
</comment>
<comment type="subcellular location">
    <subcellularLocation>
        <location evidence="1">Cytoplasm</location>
    </subcellularLocation>
</comment>
<comment type="similarity">
    <text evidence="1">Belongs to the class-II aminoacyl-tRNA synthetase family.</text>
</comment>
<gene>
    <name evidence="1" type="primary">asnS</name>
    <name type="ordered locus">SO_2218</name>
</gene>
<name>SYN_SHEON</name>
<accession>Q8EEZ1</accession>
<dbReference type="EC" id="6.1.1.22" evidence="1"/>
<dbReference type="EMBL" id="AE014299">
    <property type="protein sequence ID" value="AAN55259.1"/>
    <property type="molecule type" value="Genomic_DNA"/>
</dbReference>
<dbReference type="RefSeq" id="NP_717815.1">
    <property type="nucleotide sequence ID" value="NC_004347.2"/>
</dbReference>
<dbReference type="RefSeq" id="WP_011072242.1">
    <property type="nucleotide sequence ID" value="NC_004347.2"/>
</dbReference>
<dbReference type="SMR" id="Q8EEZ1"/>
<dbReference type="STRING" id="211586.SO_2218"/>
<dbReference type="PaxDb" id="211586-SO_2218"/>
<dbReference type="KEGG" id="son:SO_2218"/>
<dbReference type="PATRIC" id="fig|211586.12.peg.2139"/>
<dbReference type="eggNOG" id="COG0017">
    <property type="taxonomic scope" value="Bacteria"/>
</dbReference>
<dbReference type="HOGENOM" id="CLU_004553_2_0_6"/>
<dbReference type="OrthoDB" id="9762036at2"/>
<dbReference type="PhylomeDB" id="Q8EEZ1"/>
<dbReference type="BioCyc" id="SONE211586:G1GMP-2031-MONOMER"/>
<dbReference type="Proteomes" id="UP000008186">
    <property type="component" value="Chromosome"/>
</dbReference>
<dbReference type="GO" id="GO:0005737">
    <property type="term" value="C:cytoplasm"/>
    <property type="evidence" value="ECO:0007669"/>
    <property type="project" value="UniProtKB-SubCell"/>
</dbReference>
<dbReference type="GO" id="GO:0004816">
    <property type="term" value="F:asparagine-tRNA ligase activity"/>
    <property type="evidence" value="ECO:0007669"/>
    <property type="project" value="UniProtKB-UniRule"/>
</dbReference>
<dbReference type="GO" id="GO:0005524">
    <property type="term" value="F:ATP binding"/>
    <property type="evidence" value="ECO:0007669"/>
    <property type="project" value="UniProtKB-UniRule"/>
</dbReference>
<dbReference type="GO" id="GO:0003676">
    <property type="term" value="F:nucleic acid binding"/>
    <property type="evidence" value="ECO:0007669"/>
    <property type="project" value="InterPro"/>
</dbReference>
<dbReference type="GO" id="GO:0006421">
    <property type="term" value="P:asparaginyl-tRNA aminoacylation"/>
    <property type="evidence" value="ECO:0000318"/>
    <property type="project" value="GO_Central"/>
</dbReference>
<dbReference type="CDD" id="cd00776">
    <property type="entry name" value="AsxRS_core"/>
    <property type="match status" value="1"/>
</dbReference>
<dbReference type="CDD" id="cd04318">
    <property type="entry name" value="EcAsnRS_like_N"/>
    <property type="match status" value="1"/>
</dbReference>
<dbReference type="FunFam" id="3.30.930.10:FF:000016">
    <property type="entry name" value="Asparagine--tRNA ligase"/>
    <property type="match status" value="1"/>
</dbReference>
<dbReference type="Gene3D" id="3.30.930.10">
    <property type="entry name" value="Bira Bifunctional Protein, Domain 2"/>
    <property type="match status" value="1"/>
</dbReference>
<dbReference type="Gene3D" id="2.40.50.140">
    <property type="entry name" value="Nucleic acid-binding proteins"/>
    <property type="match status" value="1"/>
</dbReference>
<dbReference type="HAMAP" id="MF_00534">
    <property type="entry name" value="Asn_tRNA_synth"/>
    <property type="match status" value="1"/>
</dbReference>
<dbReference type="InterPro" id="IPR004364">
    <property type="entry name" value="Aa-tRNA-synt_II"/>
</dbReference>
<dbReference type="InterPro" id="IPR006195">
    <property type="entry name" value="aa-tRNA-synth_II"/>
</dbReference>
<dbReference type="InterPro" id="IPR045864">
    <property type="entry name" value="aa-tRNA-synth_II/BPL/LPL"/>
</dbReference>
<dbReference type="InterPro" id="IPR004522">
    <property type="entry name" value="Asn-tRNA-ligase"/>
</dbReference>
<dbReference type="InterPro" id="IPR002312">
    <property type="entry name" value="Asp/Asn-tRNA-synth_IIb"/>
</dbReference>
<dbReference type="InterPro" id="IPR012340">
    <property type="entry name" value="NA-bd_OB-fold"/>
</dbReference>
<dbReference type="InterPro" id="IPR004365">
    <property type="entry name" value="NA-bd_OB_tRNA"/>
</dbReference>
<dbReference type="NCBIfam" id="TIGR00457">
    <property type="entry name" value="asnS"/>
    <property type="match status" value="1"/>
</dbReference>
<dbReference type="NCBIfam" id="NF003037">
    <property type="entry name" value="PRK03932.1"/>
    <property type="match status" value="1"/>
</dbReference>
<dbReference type="PANTHER" id="PTHR22594:SF34">
    <property type="entry name" value="ASPARAGINE--TRNA LIGASE, MITOCHONDRIAL-RELATED"/>
    <property type="match status" value="1"/>
</dbReference>
<dbReference type="PANTHER" id="PTHR22594">
    <property type="entry name" value="ASPARTYL/LYSYL-TRNA SYNTHETASE"/>
    <property type="match status" value="1"/>
</dbReference>
<dbReference type="Pfam" id="PF00152">
    <property type="entry name" value="tRNA-synt_2"/>
    <property type="match status" value="1"/>
</dbReference>
<dbReference type="Pfam" id="PF01336">
    <property type="entry name" value="tRNA_anti-codon"/>
    <property type="match status" value="1"/>
</dbReference>
<dbReference type="PRINTS" id="PR01042">
    <property type="entry name" value="TRNASYNTHASP"/>
</dbReference>
<dbReference type="SUPFAM" id="SSF55681">
    <property type="entry name" value="Class II aaRS and biotin synthetases"/>
    <property type="match status" value="1"/>
</dbReference>
<dbReference type="SUPFAM" id="SSF50249">
    <property type="entry name" value="Nucleic acid-binding proteins"/>
    <property type="match status" value="1"/>
</dbReference>
<dbReference type="PROSITE" id="PS50862">
    <property type="entry name" value="AA_TRNA_LIGASE_II"/>
    <property type="match status" value="1"/>
</dbReference>
<evidence type="ECO:0000255" key="1">
    <source>
        <dbReference type="HAMAP-Rule" id="MF_00534"/>
    </source>
</evidence>
<reference key="1">
    <citation type="journal article" date="2002" name="Nat. Biotechnol.">
        <title>Genome sequence of the dissimilatory metal ion-reducing bacterium Shewanella oneidensis.</title>
        <authorList>
            <person name="Heidelberg J.F."/>
            <person name="Paulsen I.T."/>
            <person name="Nelson K.E."/>
            <person name="Gaidos E.J."/>
            <person name="Nelson W.C."/>
            <person name="Read T.D."/>
            <person name="Eisen J.A."/>
            <person name="Seshadri R."/>
            <person name="Ward N.L."/>
            <person name="Methe B.A."/>
            <person name="Clayton R.A."/>
            <person name="Meyer T."/>
            <person name="Tsapin A."/>
            <person name="Scott J."/>
            <person name="Beanan M.J."/>
            <person name="Brinkac L.M."/>
            <person name="Daugherty S.C."/>
            <person name="DeBoy R.T."/>
            <person name="Dodson R.J."/>
            <person name="Durkin A.S."/>
            <person name="Haft D.H."/>
            <person name="Kolonay J.F."/>
            <person name="Madupu R."/>
            <person name="Peterson J.D."/>
            <person name="Umayam L.A."/>
            <person name="White O."/>
            <person name="Wolf A.M."/>
            <person name="Vamathevan J.J."/>
            <person name="Weidman J.F."/>
            <person name="Impraim M."/>
            <person name="Lee K."/>
            <person name="Berry K.J."/>
            <person name="Lee C."/>
            <person name="Mueller J."/>
            <person name="Khouri H.M."/>
            <person name="Gill J."/>
            <person name="Utterback T.R."/>
            <person name="McDonald L.A."/>
            <person name="Feldblyum T.V."/>
            <person name="Smith H.O."/>
            <person name="Venter J.C."/>
            <person name="Nealson K.H."/>
            <person name="Fraser C.M."/>
        </authorList>
    </citation>
    <scope>NUCLEOTIDE SEQUENCE [LARGE SCALE GENOMIC DNA]</scope>
    <source>
        <strain>ATCC 700550 / JCM 31522 / CIP 106686 / LMG 19005 / NCIMB 14063 / MR-1</strain>
    </source>
</reference>
<organism>
    <name type="scientific">Shewanella oneidensis (strain ATCC 700550 / JCM 31522 / CIP 106686 / LMG 19005 / NCIMB 14063 / MR-1)</name>
    <dbReference type="NCBI Taxonomy" id="211586"/>
    <lineage>
        <taxon>Bacteria</taxon>
        <taxon>Pseudomonadati</taxon>
        <taxon>Pseudomonadota</taxon>
        <taxon>Gammaproteobacteria</taxon>
        <taxon>Alteromonadales</taxon>
        <taxon>Shewanellaceae</taxon>
        <taxon>Shewanella</taxon>
    </lineage>
</organism>
<sequence>MSIASVASVFKGEHAVGSTVTVRGWVRTRRDSKAGISFLAVYDGSCFNPIQGVVPNSLENYDNEVLKLTAGCSVIVTGDIVESPGAGQAYELQVTAVEVTGWVEDPDTYPMAAKRHSIEHLRELAHLRPRTNIIGAVARVRNCLSQAIHRFYHENGFVWVSTPLITASDCEGAGEMFRVSTLDMENLPRTSDGKVDYDKDFFGKEAFLTVSGQLNGETYACALSKIYTFGPTFRAENSNTSRHLAEFWMVEPEVAFATLNDIAGLAEGMLKYAFNAVLTERMDDLQFFAQHVDKTVIERLQSFVSSDFAQVDYTDAVEILQKSGREFEFPVSWGIDLSSEHERYLAEEHFKAPVVVKNYPKDIKAFYMRLNEDGKTVAAMDVLAPGIGEIIGGSQREERLDVLDMRLEEMDLNKEDYWWYRDLRRYGTVPHAGFGLGFERLVSYVTGVSNIRDVIPFPRAPRTANF</sequence>
<proteinExistence type="inferred from homology"/>
<protein>
    <recommendedName>
        <fullName evidence="1">Asparagine--tRNA ligase</fullName>
        <ecNumber evidence="1">6.1.1.22</ecNumber>
    </recommendedName>
    <alternativeName>
        <fullName evidence="1">Asparaginyl-tRNA synthetase</fullName>
        <shortName evidence="1">AsnRS</shortName>
    </alternativeName>
</protein>
<keyword id="KW-0030">Aminoacyl-tRNA synthetase</keyword>
<keyword id="KW-0067">ATP-binding</keyword>
<keyword id="KW-0963">Cytoplasm</keyword>
<keyword id="KW-0436">Ligase</keyword>
<keyword id="KW-0547">Nucleotide-binding</keyword>
<keyword id="KW-0648">Protein biosynthesis</keyword>
<keyword id="KW-1185">Reference proteome</keyword>
<feature type="chain" id="PRO_0000176445" description="Asparagine--tRNA ligase">
    <location>
        <begin position="1"/>
        <end position="466"/>
    </location>
</feature>